<reference key="1">
    <citation type="journal article" date="2003" name="Proc. Natl. Acad. Sci. U.S.A.">
        <title>The complete genome sequence of Mycobacterium bovis.</title>
        <authorList>
            <person name="Garnier T."/>
            <person name="Eiglmeier K."/>
            <person name="Camus J.-C."/>
            <person name="Medina N."/>
            <person name="Mansoor H."/>
            <person name="Pryor M."/>
            <person name="Duthoy S."/>
            <person name="Grondin S."/>
            <person name="Lacroix C."/>
            <person name="Monsempe C."/>
            <person name="Simon S."/>
            <person name="Harris B."/>
            <person name="Atkin R."/>
            <person name="Doggett J."/>
            <person name="Mayes R."/>
            <person name="Keating L."/>
            <person name="Wheeler P.R."/>
            <person name="Parkhill J."/>
            <person name="Barrell B.G."/>
            <person name="Cole S.T."/>
            <person name="Gordon S.V."/>
            <person name="Hewinson R.G."/>
        </authorList>
    </citation>
    <scope>NUCLEOTIDE SEQUENCE [LARGE SCALE GENOMIC DNA]</scope>
    <source>
        <strain>ATCC BAA-935 / AF2122/97</strain>
    </source>
</reference>
<reference key="2">
    <citation type="journal article" date="2017" name="Genome Announc.">
        <title>Updated reference genome sequence and annotation of Mycobacterium bovis AF2122/97.</title>
        <authorList>
            <person name="Malone K.M."/>
            <person name="Farrell D."/>
            <person name="Stuber T.P."/>
            <person name="Schubert O.T."/>
            <person name="Aebersold R."/>
            <person name="Robbe-Austerman S."/>
            <person name="Gordon S.V."/>
        </authorList>
    </citation>
    <scope>NUCLEOTIDE SEQUENCE [LARGE SCALE GENOMIC DNA]</scope>
    <scope>GENOME REANNOTATION</scope>
    <source>
        <strain>ATCC BAA-935 / AF2122/97</strain>
    </source>
</reference>
<accession>P65685</accession>
<accession>A0A1R3Y044</accession>
<accession>Q93IG5</accession>
<accession>X2BJW9</accession>
<name>Y2073_MYCBO</name>
<sequence>MRIAVTGASGVLGRGLTARLLSQGHEVVGIARHRPDSWPSSADFIAADIRDATAVESAMTGADVVAHCAWVRGRNDHINIDGTANVLKAMAETGTGRIVFTSSGHQPRVEQMLADCGLEWVAVRCALIFGRNVDNWVQRLFALPVLPAGYADRVVQVVHSDDAQRLLVRALLDTVIDSGPVNLAAPGELTFRRIAAALGRPMVPIGSPVLRRVTSFAELELLHSAPLMDVTLLRDRWGFQPAWNAEECLEDFTLAVRGRIGLGKRTFSLPWRLANIQDLPAVDSPADDGVAPRLAGPEGANGEFDTPIDPRFPTYLATNLSEALPGPFSPSSASVTVRGLRAGGVGIAERLRPSGVIQREIAMRTVAVFAHRLYGAITSAHFMAATVPFAKPATIVSNSGFFGPSMASLPIFGAQRPPSESSRARRWLRTLRNIGVFGVNLVGLSAGSPRDTDAYVADVDRLERLAFDNLATHDDRRLLSLILLARDHVVHGWVLASGSFMLCAAFNVLLRGLCGRDTAPAAGPELVSARSVEAVQRLVAAARRDPVVIRLLAEPGERLDKLAVEAPEFHSAVLAELTLIGHRGPAEVEMAATSYADNPELLVRMVAKTLRAVPAPQPPTPVIPLRAKPVALLAARQLRDREVRRDRMVRAIWVLRALLREYGRRLTEAGVFDTPDDVFYLLVDEIDALPADVSGLVARRRAEQRRLAGIVPPTVFSGSWEPSPSSAAALAAGDTLRGVGVCGGRVRGRVRIVRPETIDDLQPGEILVAEVTDVGYTAAFCYAAAVVTELGGPMSHAAVVAREFGFPCVVDAQGATRFLPPGALVEVDGATGEIHVVELASEDGPALPGSDLSR</sequence>
<dbReference type="EMBL" id="LT708304">
    <property type="protein sequence ID" value="SIU00680.1"/>
    <property type="molecule type" value="Genomic_DNA"/>
</dbReference>
<dbReference type="RefSeq" id="NP_855723.1">
    <property type="nucleotide sequence ID" value="NC_002945.3"/>
</dbReference>
<dbReference type="RefSeq" id="WP_003410309.1">
    <property type="nucleotide sequence ID" value="NC_002945.4"/>
</dbReference>
<dbReference type="SMR" id="P65685"/>
<dbReference type="KEGG" id="mbo:BQ2027_MB2073C"/>
<dbReference type="PATRIC" id="fig|233413.5.peg.2279"/>
<dbReference type="Proteomes" id="UP000001419">
    <property type="component" value="Chromosome"/>
</dbReference>
<dbReference type="GO" id="GO:0016772">
    <property type="term" value="F:transferase activity, transferring phosphorus-containing groups"/>
    <property type="evidence" value="ECO:0007669"/>
    <property type="project" value="InterPro"/>
</dbReference>
<dbReference type="FunFam" id="3.50.30.10:FF:000006">
    <property type="entry name" value="UDP-glucose 4-epimerase GalE4"/>
    <property type="match status" value="1"/>
</dbReference>
<dbReference type="Gene3D" id="3.40.50.720">
    <property type="entry name" value="NAD(P)-binding Rossmann-like Domain"/>
    <property type="match status" value="1"/>
</dbReference>
<dbReference type="Gene3D" id="3.50.30.10">
    <property type="entry name" value="Phosphohistidine domain"/>
    <property type="match status" value="1"/>
</dbReference>
<dbReference type="InterPro" id="IPR001509">
    <property type="entry name" value="Epimerase_deHydtase"/>
</dbReference>
<dbReference type="InterPro" id="IPR036291">
    <property type="entry name" value="NAD(P)-bd_dom_sf"/>
</dbReference>
<dbReference type="InterPro" id="IPR008279">
    <property type="entry name" value="PEP-util_enz_mobile_dom"/>
</dbReference>
<dbReference type="InterPro" id="IPR051549">
    <property type="entry name" value="PEP_Utilizing_Enz"/>
</dbReference>
<dbReference type="InterPro" id="IPR036637">
    <property type="entry name" value="Phosphohistidine_dom_sf"/>
</dbReference>
<dbReference type="NCBIfam" id="NF004520">
    <property type="entry name" value="PRK05865.1"/>
    <property type="match status" value="1"/>
</dbReference>
<dbReference type="PANTHER" id="PTHR43615">
    <property type="entry name" value="PHOSPHOENOLPYRUVATE SYNTHASE-RELATED"/>
    <property type="match status" value="1"/>
</dbReference>
<dbReference type="PANTHER" id="PTHR43615:SF1">
    <property type="entry name" value="PPDK_N DOMAIN-CONTAINING PROTEIN"/>
    <property type="match status" value="1"/>
</dbReference>
<dbReference type="Pfam" id="PF01370">
    <property type="entry name" value="Epimerase"/>
    <property type="match status" value="1"/>
</dbReference>
<dbReference type="Pfam" id="PF00391">
    <property type="entry name" value="PEP-utilizers"/>
    <property type="match status" value="1"/>
</dbReference>
<dbReference type="SUPFAM" id="SSF51735">
    <property type="entry name" value="NAD(P)-binding Rossmann-fold domains"/>
    <property type="match status" value="1"/>
</dbReference>
<dbReference type="SUPFAM" id="SSF52009">
    <property type="entry name" value="Phosphohistidine domain"/>
    <property type="match status" value="1"/>
</dbReference>
<proteinExistence type="inferred from homology"/>
<feature type="chain" id="PRO_0000147102" description="Uncharacterized protein Mb2073c">
    <location>
        <begin position="1"/>
        <end position="854"/>
    </location>
</feature>
<organism>
    <name type="scientific">Mycobacterium bovis (strain ATCC BAA-935 / AF2122/97)</name>
    <dbReference type="NCBI Taxonomy" id="233413"/>
    <lineage>
        <taxon>Bacteria</taxon>
        <taxon>Bacillati</taxon>
        <taxon>Actinomycetota</taxon>
        <taxon>Actinomycetes</taxon>
        <taxon>Mycobacteriales</taxon>
        <taxon>Mycobacteriaceae</taxon>
        <taxon>Mycobacterium</taxon>
        <taxon>Mycobacterium tuberculosis complex</taxon>
    </lineage>
</organism>
<keyword id="KW-1185">Reference proteome</keyword>
<evidence type="ECO:0000305" key="1"/>
<gene>
    <name type="ordered locus">BQ2027_MB2073C</name>
</gene>
<comment type="similarity">
    <text evidence="1">Belongs to the PEP-utilizing enzyme family.</text>
</comment>
<protein>
    <recommendedName>
        <fullName>Uncharacterized protein Mb2073c</fullName>
    </recommendedName>
</protein>